<sequence length="266" mass="28782">MPDILDKIMAVKRQEIAAAQKKSPLEAVRFDAESRVLTRDFEGALRTRIAAGHAAVIAEVKKASPSKGVLREDFIPADIAQSYAEGDGEISAACLSVLTDKQFFQGGVDYLKQARASCDLPVLRKDFIVDAYQVYESRAMGADAVLLIAACLDDAQMKDYEAIARGLGMAVLVEVHDAAELERALKLKTPLIGVNNRNLRNFEVSIQATIDLLPRLPADRLAVTESGIATREDVATLRAAGVHAFLVGEAFMRAKEPGEALAALFK</sequence>
<gene>
    <name evidence="1" type="primary">trpC</name>
    <name type="ordered locus">Vapar_0579</name>
</gene>
<proteinExistence type="inferred from homology"/>
<organism>
    <name type="scientific">Variovorax paradoxus (strain S110)</name>
    <dbReference type="NCBI Taxonomy" id="543728"/>
    <lineage>
        <taxon>Bacteria</taxon>
        <taxon>Pseudomonadati</taxon>
        <taxon>Pseudomonadota</taxon>
        <taxon>Betaproteobacteria</taxon>
        <taxon>Burkholderiales</taxon>
        <taxon>Comamonadaceae</taxon>
        <taxon>Variovorax</taxon>
    </lineage>
</organism>
<accession>C5CKE4</accession>
<comment type="catalytic activity">
    <reaction evidence="1">
        <text>1-(2-carboxyphenylamino)-1-deoxy-D-ribulose 5-phosphate + H(+) = (1S,2R)-1-C-(indol-3-yl)glycerol 3-phosphate + CO2 + H2O</text>
        <dbReference type="Rhea" id="RHEA:23476"/>
        <dbReference type="ChEBI" id="CHEBI:15377"/>
        <dbReference type="ChEBI" id="CHEBI:15378"/>
        <dbReference type="ChEBI" id="CHEBI:16526"/>
        <dbReference type="ChEBI" id="CHEBI:58613"/>
        <dbReference type="ChEBI" id="CHEBI:58866"/>
        <dbReference type="EC" id="4.1.1.48"/>
    </reaction>
</comment>
<comment type="pathway">
    <text evidence="1">Amino-acid biosynthesis; L-tryptophan biosynthesis; L-tryptophan from chorismate: step 4/5.</text>
</comment>
<comment type="similarity">
    <text evidence="1">Belongs to the TrpC family.</text>
</comment>
<reference key="1">
    <citation type="journal article" date="2011" name="J. Bacteriol.">
        <title>Complete genome sequence of the metabolically versatile plant growth-promoting endophyte, Variovorax paradoxus S110.</title>
        <authorList>
            <person name="Han J.I."/>
            <person name="Choi H.K."/>
            <person name="Lee S.W."/>
            <person name="Orwin P.M."/>
            <person name="Kim J."/>
            <person name="Laroe S.L."/>
            <person name="Kim T.G."/>
            <person name="O'Neil J."/>
            <person name="Leadbetter J.R."/>
            <person name="Lee S.Y."/>
            <person name="Hur C.G."/>
            <person name="Spain J.C."/>
            <person name="Ovchinnikova G."/>
            <person name="Goodwin L."/>
            <person name="Han C."/>
        </authorList>
    </citation>
    <scope>NUCLEOTIDE SEQUENCE [LARGE SCALE GENOMIC DNA]</scope>
    <source>
        <strain>S110</strain>
    </source>
</reference>
<keyword id="KW-0028">Amino-acid biosynthesis</keyword>
<keyword id="KW-0057">Aromatic amino acid biosynthesis</keyword>
<keyword id="KW-0210">Decarboxylase</keyword>
<keyword id="KW-0456">Lyase</keyword>
<keyword id="KW-0822">Tryptophan biosynthesis</keyword>
<feature type="chain" id="PRO_1000203205" description="Indole-3-glycerol phosphate synthase">
    <location>
        <begin position="1"/>
        <end position="266"/>
    </location>
</feature>
<dbReference type="EC" id="4.1.1.48" evidence="1"/>
<dbReference type="EMBL" id="CP001635">
    <property type="protein sequence ID" value="ACS17242.1"/>
    <property type="molecule type" value="Genomic_DNA"/>
</dbReference>
<dbReference type="SMR" id="C5CKE4"/>
<dbReference type="STRING" id="543728.Vapar_0579"/>
<dbReference type="KEGG" id="vap:Vapar_0579"/>
<dbReference type="eggNOG" id="COG0134">
    <property type="taxonomic scope" value="Bacteria"/>
</dbReference>
<dbReference type="HOGENOM" id="CLU_034247_2_0_4"/>
<dbReference type="OrthoDB" id="9804217at2"/>
<dbReference type="UniPathway" id="UPA00035">
    <property type="reaction ID" value="UER00043"/>
</dbReference>
<dbReference type="GO" id="GO:0004425">
    <property type="term" value="F:indole-3-glycerol-phosphate synthase activity"/>
    <property type="evidence" value="ECO:0007669"/>
    <property type="project" value="UniProtKB-UniRule"/>
</dbReference>
<dbReference type="GO" id="GO:0004640">
    <property type="term" value="F:phosphoribosylanthranilate isomerase activity"/>
    <property type="evidence" value="ECO:0007669"/>
    <property type="project" value="TreeGrafter"/>
</dbReference>
<dbReference type="GO" id="GO:0000162">
    <property type="term" value="P:L-tryptophan biosynthetic process"/>
    <property type="evidence" value="ECO:0007669"/>
    <property type="project" value="UniProtKB-UniRule"/>
</dbReference>
<dbReference type="CDD" id="cd00331">
    <property type="entry name" value="IGPS"/>
    <property type="match status" value="1"/>
</dbReference>
<dbReference type="FunFam" id="3.20.20.70:FF:000024">
    <property type="entry name" value="Indole-3-glycerol phosphate synthase"/>
    <property type="match status" value="1"/>
</dbReference>
<dbReference type="Gene3D" id="3.20.20.70">
    <property type="entry name" value="Aldolase class I"/>
    <property type="match status" value="1"/>
</dbReference>
<dbReference type="HAMAP" id="MF_00134_B">
    <property type="entry name" value="IGPS_B"/>
    <property type="match status" value="1"/>
</dbReference>
<dbReference type="InterPro" id="IPR013785">
    <property type="entry name" value="Aldolase_TIM"/>
</dbReference>
<dbReference type="InterPro" id="IPR045186">
    <property type="entry name" value="Indole-3-glycerol_P_synth"/>
</dbReference>
<dbReference type="InterPro" id="IPR013798">
    <property type="entry name" value="Indole-3-glycerol_P_synth_dom"/>
</dbReference>
<dbReference type="InterPro" id="IPR001468">
    <property type="entry name" value="Indole-3-GlycerolPSynthase_CS"/>
</dbReference>
<dbReference type="InterPro" id="IPR011060">
    <property type="entry name" value="RibuloseP-bd_barrel"/>
</dbReference>
<dbReference type="NCBIfam" id="NF001373">
    <property type="entry name" value="PRK00278.1-6"/>
    <property type="match status" value="1"/>
</dbReference>
<dbReference type="NCBIfam" id="NF001377">
    <property type="entry name" value="PRK00278.2-4"/>
    <property type="match status" value="1"/>
</dbReference>
<dbReference type="PANTHER" id="PTHR22854:SF2">
    <property type="entry name" value="INDOLE-3-GLYCEROL-PHOSPHATE SYNTHASE"/>
    <property type="match status" value="1"/>
</dbReference>
<dbReference type="PANTHER" id="PTHR22854">
    <property type="entry name" value="TRYPTOPHAN BIOSYNTHESIS PROTEIN"/>
    <property type="match status" value="1"/>
</dbReference>
<dbReference type="Pfam" id="PF00218">
    <property type="entry name" value="IGPS"/>
    <property type="match status" value="1"/>
</dbReference>
<dbReference type="SUPFAM" id="SSF51366">
    <property type="entry name" value="Ribulose-phoshate binding barrel"/>
    <property type="match status" value="1"/>
</dbReference>
<dbReference type="PROSITE" id="PS00614">
    <property type="entry name" value="IGPS"/>
    <property type="match status" value="1"/>
</dbReference>
<protein>
    <recommendedName>
        <fullName evidence="1">Indole-3-glycerol phosphate synthase</fullName>
        <shortName evidence="1">IGPS</shortName>
        <ecNumber evidence="1">4.1.1.48</ecNumber>
    </recommendedName>
</protein>
<name>TRPC_VARPS</name>
<evidence type="ECO:0000255" key="1">
    <source>
        <dbReference type="HAMAP-Rule" id="MF_00134"/>
    </source>
</evidence>